<keyword id="KW-1185">Reference proteome</keyword>
<keyword id="KW-0687">Ribonucleoprotein</keyword>
<keyword id="KW-0689">Ribosomal protein</keyword>
<keyword id="KW-0694">RNA-binding</keyword>
<keyword id="KW-0699">rRNA-binding</keyword>
<keyword id="KW-0820">tRNA-binding</keyword>
<protein>
    <recommendedName>
        <fullName evidence="1">Small ribosomal subunit protein uS13</fullName>
    </recommendedName>
    <alternativeName>
        <fullName evidence="3">30S ribosomal protein S13</fullName>
    </alternativeName>
</protein>
<accession>Q7VQC6</accession>
<evidence type="ECO:0000255" key="1">
    <source>
        <dbReference type="HAMAP-Rule" id="MF_01315"/>
    </source>
</evidence>
<evidence type="ECO:0000256" key="2">
    <source>
        <dbReference type="SAM" id="MobiDB-lite"/>
    </source>
</evidence>
<evidence type="ECO:0000305" key="3"/>
<gene>
    <name evidence="1" type="primary">rpsM</name>
    <name type="ordered locus">Bfl213</name>
</gene>
<proteinExistence type="inferred from homology"/>
<sequence length="118" mass="13527">MVRIAGVNVPDRKHAVIALMSIYGIGRSRAKLICLSIGVDEYTKIGQLSDVYIDKMRNEIAKYVVEGDLRREVTLNIKRLIDLGTYRGLRHRRNLPVRGQRTRTNARTRKGPKKLINK</sequence>
<reference key="1">
    <citation type="journal article" date="2003" name="Proc. Natl. Acad. Sci. U.S.A.">
        <title>The genome sequence of Blochmannia floridanus: comparative analysis of reduced genomes.</title>
        <authorList>
            <person name="Gil R."/>
            <person name="Silva F.J."/>
            <person name="Zientz E."/>
            <person name="Delmotte F."/>
            <person name="Gonzalez-Candelas F."/>
            <person name="Latorre A."/>
            <person name="Rausell C."/>
            <person name="Kamerbeek J."/>
            <person name="Gadau J."/>
            <person name="Hoelldobler B."/>
            <person name="van Ham R.C.H.J."/>
            <person name="Gross R."/>
            <person name="Moya A."/>
        </authorList>
    </citation>
    <scope>NUCLEOTIDE SEQUENCE [LARGE SCALE GENOMIC DNA]</scope>
</reference>
<dbReference type="EMBL" id="BX248583">
    <property type="protein sequence ID" value="CAD83728.1"/>
    <property type="molecule type" value="Genomic_DNA"/>
</dbReference>
<dbReference type="SMR" id="Q7VQC6"/>
<dbReference type="STRING" id="203907.Bfl213"/>
<dbReference type="KEGG" id="bfl:Bfl213"/>
<dbReference type="eggNOG" id="COG0099">
    <property type="taxonomic scope" value="Bacteria"/>
</dbReference>
<dbReference type="HOGENOM" id="CLU_103849_1_2_6"/>
<dbReference type="OrthoDB" id="9803610at2"/>
<dbReference type="Proteomes" id="UP000002192">
    <property type="component" value="Chromosome"/>
</dbReference>
<dbReference type="GO" id="GO:0005829">
    <property type="term" value="C:cytosol"/>
    <property type="evidence" value="ECO:0007669"/>
    <property type="project" value="TreeGrafter"/>
</dbReference>
<dbReference type="GO" id="GO:0015935">
    <property type="term" value="C:small ribosomal subunit"/>
    <property type="evidence" value="ECO:0007669"/>
    <property type="project" value="TreeGrafter"/>
</dbReference>
<dbReference type="GO" id="GO:0019843">
    <property type="term" value="F:rRNA binding"/>
    <property type="evidence" value="ECO:0007669"/>
    <property type="project" value="UniProtKB-UniRule"/>
</dbReference>
<dbReference type="GO" id="GO:0003735">
    <property type="term" value="F:structural constituent of ribosome"/>
    <property type="evidence" value="ECO:0007669"/>
    <property type="project" value="InterPro"/>
</dbReference>
<dbReference type="GO" id="GO:0000049">
    <property type="term" value="F:tRNA binding"/>
    <property type="evidence" value="ECO:0007669"/>
    <property type="project" value="UniProtKB-UniRule"/>
</dbReference>
<dbReference type="GO" id="GO:0006412">
    <property type="term" value="P:translation"/>
    <property type="evidence" value="ECO:0007669"/>
    <property type="project" value="UniProtKB-UniRule"/>
</dbReference>
<dbReference type="FunFam" id="1.10.8.50:FF:000001">
    <property type="entry name" value="30S ribosomal protein S13"/>
    <property type="match status" value="1"/>
</dbReference>
<dbReference type="FunFam" id="4.10.910.10:FF:000001">
    <property type="entry name" value="30S ribosomal protein S13"/>
    <property type="match status" value="1"/>
</dbReference>
<dbReference type="Gene3D" id="1.10.8.50">
    <property type="match status" value="1"/>
</dbReference>
<dbReference type="Gene3D" id="4.10.910.10">
    <property type="entry name" value="30s ribosomal protein s13, domain 2"/>
    <property type="match status" value="1"/>
</dbReference>
<dbReference type="HAMAP" id="MF_01315">
    <property type="entry name" value="Ribosomal_uS13"/>
    <property type="match status" value="1"/>
</dbReference>
<dbReference type="InterPro" id="IPR027437">
    <property type="entry name" value="Rbsml_uS13_C"/>
</dbReference>
<dbReference type="InterPro" id="IPR001892">
    <property type="entry name" value="Ribosomal_uS13"/>
</dbReference>
<dbReference type="InterPro" id="IPR010979">
    <property type="entry name" value="Ribosomal_uS13-like_H2TH"/>
</dbReference>
<dbReference type="InterPro" id="IPR019980">
    <property type="entry name" value="Ribosomal_uS13_bac-type"/>
</dbReference>
<dbReference type="InterPro" id="IPR018269">
    <property type="entry name" value="Ribosomal_uS13_CS"/>
</dbReference>
<dbReference type="NCBIfam" id="TIGR03631">
    <property type="entry name" value="uS13_bact"/>
    <property type="match status" value="1"/>
</dbReference>
<dbReference type="PANTHER" id="PTHR10871">
    <property type="entry name" value="30S RIBOSOMAL PROTEIN S13/40S RIBOSOMAL PROTEIN S18"/>
    <property type="match status" value="1"/>
</dbReference>
<dbReference type="PANTHER" id="PTHR10871:SF1">
    <property type="entry name" value="SMALL RIBOSOMAL SUBUNIT PROTEIN US13M"/>
    <property type="match status" value="1"/>
</dbReference>
<dbReference type="Pfam" id="PF00416">
    <property type="entry name" value="Ribosomal_S13"/>
    <property type="match status" value="1"/>
</dbReference>
<dbReference type="PIRSF" id="PIRSF002134">
    <property type="entry name" value="Ribosomal_S13"/>
    <property type="match status" value="1"/>
</dbReference>
<dbReference type="SUPFAM" id="SSF46946">
    <property type="entry name" value="S13-like H2TH domain"/>
    <property type="match status" value="1"/>
</dbReference>
<dbReference type="PROSITE" id="PS00646">
    <property type="entry name" value="RIBOSOMAL_S13_1"/>
    <property type="match status" value="1"/>
</dbReference>
<dbReference type="PROSITE" id="PS50159">
    <property type="entry name" value="RIBOSOMAL_S13_2"/>
    <property type="match status" value="1"/>
</dbReference>
<comment type="function">
    <text evidence="1">Located at the top of the head of the 30S subunit, it contacts several helices of the 16S rRNA. In the 70S ribosome it contacts the 23S rRNA (bridge B1a) and protein L5 of the 50S subunit (bridge B1b), connecting the 2 subunits; these bridges are implicated in subunit movement. Contacts the tRNAs in the A and P-sites.</text>
</comment>
<comment type="subunit">
    <text evidence="1">Part of the 30S ribosomal subunit. Forms a loose heterodimer with protein S19. Forms two bridges to the 50S subunit in the 70S ribosome.</text>
</comment>
<comment type="similarity">
    <text evidence="1">Belongs to the universal ribosomal protein uS13 family.</text>
</comment>
<feature type="chain" id="PRO_0000230476" description="Small ribosomal subunit protein uS13">
    <location>
        <begin position="1"/>
        <end position="118"/>
    </location>
</feature>
<feature type="region of interest" description="Disordered" evidence="2">
    <location>
        <begin position="95"/>
        <end position="118"/>
    </location>
</feature>
<organism>
    <name type="scientific">Blochmanniella floridana</name>
    <dbReference type="NCBI Taxonomy" id="203907"/>
    <lineage>
        <taxon>Bacteria</taxon>
        <taxon>Pseudomonadati</taxon>
        <taxon>Pseudomonadota</taxon>
        <taxon>Gammaproteobacteria</taxon>
        <taxon>Enterobacterales</taxon>
        <taxon>Enterobacteriaceae</taxon>
        <taxon>ant endosymbionts</taxon>
        <taxon>Candidatus Blochmanniella</taxon>
    </lineage>
</organism>
<name>RS13_BLOFL</name>